<accession>C0SP99</accession>
<accession>P94399</accession>
<accession>Q797Q0</accession>
<evidence type="ECO:0000255" key="1">
    <source>
        <dbReference type="PROSITE-ProRule" id="PRU00303"/>
    </source>
</evidence>
<evidence type="ECO:0000255" key="2">
    <source>
        <dbReference type="PROSITE-ProRule" id="PRU01373"/>
    </source>
</evidence>
<evidence type="ECO:0000269" key="3">
    <source>
    </source>
</evidence>
<evidence type="ECO:0000305" key="4"/>
<proteinExistence type="evidence at transcript level"/>
<organism>
    <name type="scientific">Bacillus subtilis (strain 168)</name>
    <dbReference type="NCBI Taxonomy" id="224308"/>
    <lineage>
        <taxon>Bacteria</taxon>
        <taxon>Bacillati</taxon>
        <taxon>Bacillota</taxon>
        <taxon>Bacilli</taxon>
        <taxon>Bacillales</taxon>
        <taxon>Bacillaceae</taxon>
        <taxon>Bacillus</taxon>
    </lineage>
</organism>
<sequence>MKLSLFIIAVLMPVILLSACSDHAEEHASINTKKTVENITDVRKTAKTSIDWTKPSGGEYPDIKQKHVWIDVNVKEQKAYIKEGSNTIYTMMISSGLDQTKDDATPKGTFYVEPERGEWFFSEGYQEGAEYWVSWKNHGEFLFHSVPMTKDQKVIKTEAEKLGTKASHGCIRLTIPDAKWVYENIPEHTKVVIS</sequence>
<name>YCIB_BACSU</name>
<comment type="pathway">
    <text>Cell wall biogenesis; peptidoglycan biosynthesis.</text>
</comment>
<comment type="subcellular location">
    <subcellularLocation>
        <location evidence="1">Cell membrane</location>
        <topology evidence="1">Lipid-anchor</topology>
    </subcellularLocation>
</comment>
<comment type="induction">
    <text evidence="3">Repressed by zinc via the metallo-regulatory protein zur.</text>
</comment>
<comment type="similarity">
    <text evidence="4">Belongs to the YkuD family.</text>
</comment>
<reference key="1">
    <citation type="journal article" date="1996" name="Microbiology">
        <title>The 25 degrees-36 degrees region of the Bacillus subtilis chromosome: determination of the sequence of a 146 kb segment and identification of 113 genes.</title>
        <authorList>
            <person name="Yamane K."/>
            <person name="Kumano M."/>
            <person name="Kurita K."/>
        </authorList>
    </citation>
    <scope>NUCLEOTIDE SEQUENCE [GENOMIC DNA]</scope>
    <source>
        <strain>168</strain>
    </source>
</reference>
<reference key="2">
    <citation type="journal article" date="1997" name="Nature">
        <title>The complete genome sequence of the Gram-positive bacterium Bacillus subtilis.</title>
        <authorList>
            <person name="Kunst F."/>
            <person name="Ogasawara N."/>
            <person name="Moszer I."/>
            <person name="Albertini A.M."/>
            <person name="Alloni G."/>
            <person name="Azevedo V."/>
            <person name="Bertero M.G."/>
            <person name="Bessieres P."/>
            <person name="Bolotin A."/>
            <person name="Borchert S."/>
            <person name="Borriss R."/>
            <person name="Boursier L."/>
            <person name="Brans A."/>
            <person name="Braun M."/>
            <person name="Brignell S.C."/>
            <person name="Bron S."/>
            <person name="Brouillet S."/>
            <person name="Bruschi C.V."/>
            <person name="Caldwell B."/>
            <person name="Capuano V."/>
            <person name="Carter N.M."/>
            <person name="Choi S.-K."/>
            <person name="Codani J.-J."/>
            <person name="Connerton I.F."/>
            <person name="Cummings N.J."/>
            <person name="Daniel R.A."/>
            <person name="Denizot F."/>
            <person name="Devine K.M."/>
            <person name="Duesterhoeft A."/>
            <person name="Ehrlich S.D."/>
            <person name="Emmerson P.T."/>
            <person name="Entian K.-D."/>
            <person name="Errington J."/>
            <person name="Fabret C."/>
            <person name="Ferrari E."/>
            <person name="Foulger D."/>
            <person name="Fritz C."/>
            <person name="Fujita M."/>
            <person name="Fujita Y."/>
            <person name="Fuma S."/>
            <person name="Galizzi A."/>
            <person name="Galleron N."/>
            <person name="Ghim S.-Y."/>
            <person name="Glaser P."/>
            <person name="Goffeau A."/>
            <person name="Golightly E.J."/>
            <person name="Grandi G."/>
            <person name="Guiseppi G."/>
            <person name="Guy B.J."/>
            <person name="Haga K."/>
            <person name="Haiech J."/>
            <person name="Harwood C.R."/>
            <person name="Henaut A."/>
            <person name="Hilbert H."/>
            <person name="Holsappel S."/>
            <person name="Hosono S."/>
            <person name="Hullo M.-F."/>
            <person name="Itaya M."/>
            <person name="Jones L.-M."/>
            <person name="Joris B."/>
            <person name="Karamata D."/>
            <person name="Kasahara Y."/>
            <person name="Klaerr-Blanchard M."/>
            <person name="Klein C."/>
            <person name="Kobayashi Y."/>
            <person name="Koetter P."/>
            <person name="Koningstein G."/>
            <person name="Krogh S."/>
            <person name="Kumano M."/>
            <person name="Kurita K."/>
            <person name="Lapidus A."/>
            <person name="Lardinois S."/>
            <person name="Lauber J."/>
            <person name="Lazarevic V."/>
            <person name="Lee S.-M."/>
            <person name="Levine A."/>
            <person name="Liu H."/>
            <person name="Masuda S."/>
            <person name="Mauel C."/>
            <person name="Medigue C."/>
            <person name="Medina N."/>
            <person name="Mellado R.P."/>
            <person name="Mizuno M."/>
            <person name="Moestl D."/>
            <person name="Nakai S."/>
            <person name="Noback M."/>
            <person name="Noone D."/>
            <person name="O'Reilly M."/>
            <person name="Ogawa K."/>
            <person name="Ogiwara A."/>
            <person name="Oudega B."/>
            <person name="Park S.-H."/>
            <person name="Parro V."/>
            <person name="Pohl T.M."/>
            <person name="Portetelle D."/>
            <person name="Porwollik S."/>
            <person name="Prescott A.M."/>
            <person name="Presecan E."/>
            <person name="Pujic P."/>
            <person name="Purnelle B."/>
            <person name="Rapoport G."/>
            <person name="Rey M."/>
            <person name="Reynolds S."/>
            <person name="Rieger M."/>
            <person name="Rivolta C."/>
            <person name="Rocha E."/>
            <person name="Roche B."/>
            <person name="Rose M."/>
            <person name="Sadaie Y."/>
            <person name="Sato T."/>
            <person name="Scanlan E."/>
            <person name="Schleich S."/>
            <person name="Schroeter R."/>
            <person name="Scoffone F."/>
            <person name="Sekiguchi J."/>
            <person name="Sekowska A."/>
            <person name="Seror S.J."/>
            <person name="Serror P."/>
            <person name="Shin B.-S."/>
            <person name="Soldo B."/>
            <person name="Sorokin A."/>
            <person name="Tacconi E."/>
            <person name="Takagi T."/>
            <person name="Takahashi H."/>
            <person name="Takemaru K."/>
            <person name="Takeuchi M."/>
            <person name="Tamakoshi A."/>
            <person name="Tanaka T."/>
            <person name="Terpstra P."/>
            <person name="Tognoni A."/>
            <person name="Tosato V."/>
            <person name="Uchiyama S."/>
            <person name="Vandenbol M."/>
            <person name="Vannier F."/>
            <person name="Vassarotti A."/>
            <person name="Viari A."/>
            <person name="Wambutt R."/>
            <person name="Wedler E."/>
            <person name="Wedler H."/>
            <person name="Weitzenegger T."/>
            <person name="Winters P."/>
            <person name="Wipat A."/>
            <person name="Yamamoto H."/>
            <person name="Yamane K."/>
            <person name="Yasumoto K."/>
            <person name="Yata K."/>
            <person name="Yoshida K."/>
            <person name="Yoshikawa H.-F."/>
            <person name="Zumstein E."/>
            <person name="Yoshikawa H."/>
            <person name="Danchin A."/>
        </authorList>
    </citation>
    <scope>NUCLEOTIDE SEQUENCE [LARGE SCALE GENOMIC DNA]</scope>
    <source>
        <strain>168</strain>
    </source>
</reference>
<reference key="3">
    <citation type="journal article" date="2009" name="Microbiology">
        <title>From a consortium sequence to a unified sequence: the Bacillus subtilis 168 reference genome a decade later.</title>
        <authorList>
            <person name="Barbe V."/>
            <person name="Cruveiller S."/>
            <person name="Kunst F."/>
            <person name="Lenoble P."/>
            <person name="Meurice G."/>
            <person name="Sekowska A."/>
            <person name="Vallenet D."/>
            <person name="Wang T."/>
            <person name="Moszer I."/>
            <person name="Medigue C."/>
            <person name="Danchin A."/>
        </authorList>
    </citation>
    <scope>SEQUENCE REVISION TO 166</scope>
</reference>
<reference key="4">
    <citation type="journal article" date="2002" name="J. Bacteriol.">
        <title>Functional analysis of the Bacillus subtilis Zur regulon.</title>
        <authorList>
            <person name="Gaballa A."/>
            <person name="Wang T."/>
            <person name="Ye R.W."/>
            <person name="Helmann J.D."/>
        </authorList>
    </citation>
    <scope>INDUCTION</scope>
    <source>
        <strain>168 / CU1065</strain>
    </source>
</reference>
<gene>
    <name type="primary">yciB</name>
    <name type="ordered locus">BSU03350</name>
</gene>
<feature type="signal peptide" evidence="1">
    <location>
        <begin position="1"/>
        <end position="19"/>
    </location>
</feature>
<feature type="chain" id="PRO_0000387934" description="Putative L,D-transpeptidase YciB">
    <location>
        <begin position="20"/>
        <end position="194"/>
    </location>
</feature>
<feature type="domain" description="L,D-TPase catalytic" evidence="2">
    <location>
        <begin position="68"/>
        <end position="194"/>
    </location>
</feature>
<feature type="active site" description="Proton donor/acceptor" evidence="2">
    <location>
        <position position="144"/>
    </location>
</feature>
<feature type="active site" description="Nucleophile" evidence="2">
    <location>
        <position position="170"/>
    </location>
</feature>
<feature type="lipid moiety-binding region" description="N-palmitoyl cysteine" evidence="1">
    <location>
        <position position="20"/>
    </location>
</feature>
<feature type="lipid moiety-binding region" description="S-diacylglycerol cysteine" evidence="1">
    <location>
        <position position="20"/>
    </location>
</feature>
<feature type="sequence conflict" description="In Ref. 1; BAA08969." evidence="4" ref="1">
    <original>A</original>
    <variation>V</variation>
    <location>
        <position position="166"/>
    </location>
</feature>
<keyword id="KW-1003">Cell membrane</keyword>
<keyword id="KW-0133">Cell shape</keyword>
<keyword id="KW-0961">Cell wall biogenesis/degradation</keyword>
<keyword id="KW-0328">Glycosyltransferase</keyword>
<keyword id="KW-0378">Hydrolase</keyword>
<keyword id="KW-0449">Lipoprotein</keyword>
<keyword id="KW-0472">Membrane</keyword>
<keyword id="KW-0564">Palmitate</keyword>
<keyword id="KW-0573">Peptidoglycan synthesis</keyword>
<keyword id="KW-1185">Reference proteome</keyword>
<keyword id="KW-0732">Signal</keyword>
<keyword id="KW-0808">Transferase</keyword>
<protein>
    <recommendedName>
        <fullName>Putative L,D-transpeptidase YciB</fullName>
        <ecNumber>2.-.-.-</ecNumber>
    </recommendedName>
</protein>
<dbReference type="EC" id="2.-.-.-"/>
<dbReference type="EMBL" id="D50453">
    <property type="protein sequence ID" value="BAA08969.1"/>
    <property type="molecule type" value="Genomic_DNA"/>
</dbReference>
<dbReference type="EMBL" id="AL009126">
    <property type="protein sequence ID" value="CAB12129.2"/>
    <property type="molecule type" value="Genomic_DNA"/>
</dbReference>
<dbReference type="PIR" id="A69760">
    <property type="entry name" value="A69760"/>
</dbReference>
<dbReference type="RefSeq" id="NP_388217.2">
    <property type="nucleotide sequence ID" value="NC_000964.3"/>
</dbReference>
<dbReference type="RefSeq" id="WP_003246380.1">
    <property type="nucleotide sequence ID" value="NZ_OZ025638.1"/>
</dbReference>
<dbReference type="SMR" id="C0SP99"/>
<dbReference type="FunCoup" id="C0SP99">
    <property type="interactions" value="56"/>
</dbReference>
<dbReference type="STRING" id="224308.BSU03350"/>
<dbReference type="TCDB" id="9.B.10.1.1">
    <property type="family name" value="the putative tripartite zn(2+) transporter (tzt) family"/>
</dbReference>
<dbReference type="PaxDb" id="224308-BSU03350"/>
<dbReference type="EnsemblBacteria" id="CAB12129">
    <property type="protein sequence ID" value="CAB12129"/>
    <property type="gene ID" value="BSU_03350"/>
</dbReference>
<dbReference type="GeneID" id="938318"/>
<dbReference type="KEGG" id="bsu:BSU03350"/>
<dbReference type="PATRIC" id="fig|224308.179.peg.349"/>
<dbReference type="eggNOG" id="COG1376">
    <property type="taxonomic scope" value="Bacteria"/>
</dbReference>
<dbReference type="InParanoid" id="C0SP99"/>
<dbReference type="OrthoDB" id="177750at2"/>
<dbReference type="PhylomeDB" id="C0SP99"/>
<dbReference type="BioCyc" id="BSUB:BSU03350-MONOMER"/>
<dbReference type="UniPathway" id="UPA00219"/>
<dbReference type="Proteomes" id="UP000001570">
    <property type="component" value="Chromosome"/>
</dbReference>
<dbReference type="GO" id="GO:0051286">
    <property type="term" value="C:cell tip"/>
    <property type="evidence" value="ECO:0000314"/>
    <property type="project" value="CACAO"/>
</dbReference>
<dbReference type="GO" id="GO:0005886">
    <property type="term" value="C:plasma membrane"/>
    <property type="evidence" value="ECO:0007669"/>
    <property type="project" value="UniProtKB-SubCell"/>
</dbReference>
<dbReference type="GO" id="GO:0016757">
    <property type="term" value="F:glycosyltransferase activity"/>
    <property type="evidence" value="ECO:0007669"/>
    <property type="project" value="UniProtKB-KW"/>
</dbReference>
<dbReference type="GO" id="GO:0071972">
    <property type="term" value="F:peptidoglycan L,D-transpeptidase activity"/>
    <property type="evidence" value="ECO:0000318"/>
    <property type="project" value="GO_Central"/>
</dbReference>
<dbReference type="GO" id="GO:0071555">
    <property type="term" value="P:cell wall organization"/>
    <property type="evidence" value="ECO:0007669"/>
    <property type="project" value="UniProtKB-KW"/>
</dbReference>
<dbReference type="GO" id="GO:0018104">
    <property type="term" value="P:peptidoglycan-protein cross-linking"/>
    <property type="evidence" value="ECO:0000318"/>
    <property type="project" value="GO_Central"/>
</dbReference>
<dbReference type="GO" id="GO:0008360">
    <property type="term" value="P:regulation of cell shape"/>
    <property type="evidence" value="ECO:0007669"/>
    <property type="project" value="UniProtKB-KW"/>
</dbReference>
<dbReference type="CDD" id="cd16913">
    <property type="entry name" value="YkuD_like"/>
    <property type="match status" value="1"/>
</dbReference>
<dbReference type="Gene3D" id="2.40.440.10">
    <property type="entry name" value="L,D-transpeptidase catalytic domain-like"/>
    <property type="match status" value="1"/>
</dbReference>
<dbReference type="InterPro" id="IPR050979">
    <property type="entry name" value="LD-transpeptidase"/>
</dbReference>
<dbReference type="InterPro" id="IPR005490">
    <property type="entry name" value="LD_TPept_cat_dom"/>
</dbReference>
<dbReference type="InterPro" id="IPR038063">
    <property type="entry name" value="Transpep_catalytic_dom"/>
</dbReference>
<dbReference type="PANTHER" id="PTHR30582">
    <property type="entry name" value="L,D-TRANSPEPTIDASE"/>
    <property type="match status" value="1"/>
</dbReference>
<dbReference type="PANTHER" id="PTHR30582:SF2">
    <property type="entry name" value="L,D-TRANSPEPTIDASE YCIB-RELATED"/>
    <property type="match status" value="1"/>
</dbReference>
<dbReference type="Pfam" id="PF03734">
    <property type="entry name" value="YkuD"/>
    <property type="match status" value="1"/>
</dbReference>
<dbReference type="SUPFAM" id="SSF141523">
    <property type="entry name" value="L,D-transpeptidase catalytic domain-like"/>
    <property type="match status" value="1"/>
</dbReference>
<dbReference type="PROSITE" id="PS52029">
    <property type="entry name" value="LD_TPASE"/>
    <property type="match status" value="1"/>
</dbReference>
<dbReference type="PROSITE" id="PS51257">
    <property type="entry name" value="PROKAR_LIPOPROTEIN"/>
    <property type="match status" value="1"/>
</dbReference>